<feature type="initiator methionine" description="Removed" evidence="1">
    <location>
        <position position="1"/>
    </location>
</feature>
<feature type="chain" id="PRO_0000168441" description="L-lactate dehydrogenase A chain">
    <location>
        <begin position="2"/>
        <end position="331"/>
    </location>
</feature>
<feature type="active site" description="Proton acceptor" evidence="1">
    <location>
        <position position="192"/>
    </location>
</feature>
<feature type="binding site" evidence="1">
    <location>
        <begin position="29"/>
        <end position="57"/>
    </location>
    <ligand>
        <name>NAD(+)</name>
        <dbReference type="ChEBI" id="CHEBI:57540"/>
    </ligand>
</feature>
<feature type="binding site" evidence="1">
    <location>
        <position position="98"/>
    </location>
    <ligand>
        <name>NAD(+)</name>
        <dbReference type="ChEBI" id="CHEBI:57540"/>
    </ligand>
</feature>
<feature type="binding site" evidence="1">
    <location>
        <position position="105"/>
    </location>
    <ligand>
        <name>substrate</name>
    </ligand>
</feature>
<feature type="binding site" evidence="1">
    <location>
        <position position="137"/>
    </location>
    <ligand>
        <name>NAD(+)</name>
        <dbReference type="ChEBI" id="CHEBI:57540"/>
    </ligand>
</feature>
<feature type="binding site" evidence="1">
    <location>
        <position position="137"/>
    </location>
    <ligand>
        <name>substrate</name>
    </ligand>
</feature>
<feature type="binding site" evidence="1">
    <location>
        <position position="168"/>
    </location>
    <ligand>
        <name>substrate</name>
    </ligand>
</feature>
<feature type="binding site" evidence="1">
    <location>
        <position position="247"/>
    </location>
    <ligand>
        <name>substrate</name>
    </ligand>
</feature>
<evidence type="ECO:0000250" key="1"/>
<evidence type="ECO:0000250" key="2">
    <source>
        <dbReference type="UniProtKB" id="P00338"/>
    </source>
</evidence>
<evidence type="ECO:0000305" key="3"/>
<dbReference type="EC" id="1.1.1.27" evidence="2"/>
<dbReference type="EMBL" id="AF079823">
    <property type="protein sequence ID" value="AAC63281.1"/>
    <property type="molecule type" value="mRNA"/>
</dbReference>
<dbReference type="SMR" id="O93540"/>
<dbReference type="UniPathway" id="UPA00554">
    <property type="reaction ID" value="UER00611"/>
</dbReference>
<dbReference type="GO" id="GO:0005737">
    <property type="term" value="C:cytoplasm"/>
    <property type="evidence" value="ECO:0007669"/>
    <property type="project" value="UniProtKB-SubCell"/>
</dbReference>
<dbReference type="GO" id="GO:0004459">
    <property type="term" value="F:L-lactate dehydrogenase activity"/>
    <property type="evidence" value="ECO:0007669"/>
    <property type="project" value="UniProtKB-EC"/>
</dbReference>
<dbReference type="GO" id="GO:0006089">
    <property type="term" value="P:lactate metabolic process"/>
    <property type="evidence" value="ECO:0007669"/>
    <property type="project" value="TreeGrafter"/>
</dbReference>
<dbReference type="CDD" id="cd05293">
    <property type="entry name" value="LDH_1"/>
    <property type="match status" value="1"/>
</dbReference>
<dbReference type="FunFam" id="3.40.50.720:FF:000029">
    <property type="entry name" value="L-lactate dehydrogenase A chain"/>
    <property type="match status" value="1"/>
</dbReference>
<dbReference type="FunFam" id="3.90.110.10:FF:000003">
    <property type="entry name" value="L-lactate dehydrogenase A chain"/>
    <property type="match status" value="1"/>
</dbReference>
<dbReference type="Gene3D" id="3.90.110.10">
    <property type="entry name" value="Lactate dehydrogenase/glycoside hydrolase, family 4, C-terminal"/>
    <property type="match status" value="1"/>
</dbReference>
<dbReference type="Gene3D" id="3.40.50.720">
    <property type="entry name" value="NAD(P)-binding Rossmann-like Domain"/>
    <property type="match status" value="1"/>
</dbReference>
<dbReference type="HAMAP" id="MF_00488">
    <property type="entry name" value="Lactate_dehydrog"/>
    <property type="match status" value="1"/>
</dbReference>
<dbReference type="InterPro" id="IPR001557">
    <property type="entry name" value="L-lactate/malate_DH"/>
</dbReference>
<dbReference type="InterPro" id="IPR011304">
    <property type="entry name" value="L-lactate_DH"/>
</dbReference>
<dbReference type="InterPro" id="IPR018177">
    <property type="entry name" value="L-lactate_DH_AS"/>
</dbReference>
<dbReference type="InterPro" id="IPR022383">
    <property type="entry name" value="Lactate/malate_DH_C"/>
</dbReference>
<dbReference type="InterPro" id="IPR001236">
    <property type="entry name" value="Lactate/malate_DH_N"/>
</dbReference>
<dbReference type="InterPro" id="IPR015955">
    <property type="entry name" value="Lactate_DH/Glyco_Ohase_4_C"/>
</dbReference>
<dbReference type="InterPro" id="IPR036291">
    <property type="entry name" value="NAD(P)-bd_dom_sf"/>
</dbReference>
<dbReference type="NCBIfam" id="TIGR01771">
    <property type="entry name" value="L-LDH-NAD"/>
    <property type="match status" value="1"/>
</dbReference>
<dbReference type="PANTHER" id="PTHR43128">
    <property type="entry name" value="L-2-HYDROXYCARBOXYLATE DEHYDROGENASE (NAD(P)(+))"/>
    <property type="match status" value="1"/>
</dbReference>
<dbReference type="PANTHER" id="PTHR43128:SF10">
    <property type="entry name" value="L-LACTATE DEHYDROGENASE A CHAIN"/>
    <property type="match status" value="1"/>
</dbReference>
<dbReference type="Pfam" id="PF02866">
    <property type="entry name" value="Ldh_1_C"/>
    <property type="match status" value="1"/>
</dbReference>
<dbReference type="Pfam" id="PF00056">
    <property type="entry name" value="Ldh_1_N"/>
    <property type="match status" value="1"/>
</dbReference>
<dbReference type="PIRSF" id="PIRSF000102">
    <property type="entry name" value="Lac_mal_DH"/>
    <property type="match status" value="1"/>
</dbReference>
<dbReference type="PRINTS" id="PR00086">
    <property type="entry name" value="LLDHDRGNASE"/>
</dbReference>
<dbReference type="SUPFAM" id="SSF56327">
    <property type="entry name" value="LDH C-terminal domain-like"/>
    <property type="match status" value="1"/>
</dbReference>
<dbReference type="SUPFAM" id="SSF51735">
    <property type="entry name" value="NAD(P)-binding Rossmann-fold domains"/>
    <property type="match status" value="1"/>
</dbReference>
<dbReference type="PROSITE" id="PS00064">
    <property type="entry name" value="L_LDH"/>
    <property type="match status" value="1"/>
</dbReference>
<keyword id="KW-0963">Cytoplasm</keyword>
<keyword id="KW-0520">NAD</keyword>
<keyword id="KW-0560">Oxidoreductase</keyword>
<protein>
    <recommendedName>
        <fullName>L-lactate dehydrogenase A chain</fullName>
        <shortName>LDH-A</shortName>
        <ecNumber evidence="2">1.1.1.27</ecNumber>
    </recommendedName>
</protein>
<proteinExistence type="evidence at transcript level"/>
<reference key="1">
    <citation type="journal article" date="1998" name="Proc. Natl. Acad. Sci. U.S.A.">
        <title>Hot spots in cold adaptation: localized increases in conformational flexibility in lactate dehydrogenase A4 orthologs of Antarctic notothenioid fishes.</title>
        <authorList>
            <person name="Fields P.A."/>
            <person name="Somero G.N."/>
        </authorList>
    </citation>
    <scope>NUCLEOTIDE SEQUENCE [MRNA]</scope>
    <source>
        <tissue>Muscle</tissue>
    </source>
</reference>
<gene>
    <name type="primary">ldha</name>
</gene>
<name>LDHA_GOBGI</name>
<organism>
    <name type="scientific">Gobionotothen gibberifrons</name>
    <name type="common">Humped rockcod</name>
    <name type="synonym">Notothenia gibberifrons</name>
    <dbReference type="NCBI Taxonomy" id="36202"/>
    <lineage>
        <taxon>Eukaryota</taxon>
        <taxon>Metazoa</taxon>
        <taxon>Chordata</taxon>
        <taxon>Craniata</taxon>
        <taxon>Vertebrata</taxon>
        <taxon>Euteleostomi</taxon>
        <taxon>Actinopterygii</taxon>
        <taxon>Neopterygii</taxon>
        <taxon>Teleostei</taxon>
        <taxon>Neoteleostei</taxon>
        <taxon>Acanthomorphata</taxon>
        <taxon>Eupercaria</taxon>
        <taxon>Perciformes</taxon>
        <taxon>Notothenioidei</taxon>
        <taxon>Nototheniidae</taxon>
        <taxon>Gobionotothen</taxon>
    </lineage>
</organism>
<comment type="function">
    <text evidence="2">Interconverts simultaneously and stereospecifically pyruvate and lactate with concomitant interconversion of NADH and NAD(+).</text>
</comment>
<comment type="catalytic activity">
    <reaction evidence="2">
        <text>(S)-lactate + NAD(+) = pyruvate + NADH + H(+)</text>
        <dbReference type="Rhea" id="RHEA:23444"/>
        <dbReference type="ChEBI" id="CHEBI:15361"/>
        <dbReference type="ChEBI" id="CHEBI:15378"/>
        <dbReference type="ChEBI" id="CHEBI:16651"/>
        <dbReference type="ChEBI" id="CHEBI:57540"/>
        <dbReference type="ChEBI" id="CHEBI:57945"/>
        <dbReference type="EC" id="1.1.1.27"/>
    </reaction>
    <physiologicalReaction direction="left-to-right" evidence="2">
        <dbReference type="Rhea" id="RHEA:23445"/>
    </physiologicalReaction>
    <physiologicalReaction direction="right-to-left" evidence="2">
        <dbReference type="Rhea" id="RHEA:23446"/>
    </physiologicalReaction>
</comment>
<comment type="pathway">
    <text evidence="2">Fermentation; pyruvate fermentation to lactate; (S)-lactate from pyruvate: step 1/1.</text>
</comment>
<comment type="subunit">
    <text evidence="1">Homotetramer.</text>
</comment>
<comment type="subcellular location">
    <subcellularLocation>
        <location evidence="1">Cytoplasm</location>
    </subcellularLocation>
</comment>
<comment type="similarity">
    <text evidence="3">Belongs to the LDH/MDH superfamily. LDH family.</text>
</comment>
<sequence length="331" mass="36182">MSTKEKLISHVMKEEPVGSRNKVTVVGVGMVGMASAISILLKDLCDELAMVDVMEDKLKGEVMDLQHGSLFLKTKIVGDKDYSVTANSKVVVVTAGARQQEGESRLNLVQRNVNIFKFIIPNIVKYSPNCILMVVSNPVDILTYVAWKLSGFPRHRVIGSGTNLDSARFRHLIGEKLHLHPSSCHAWIVGEHGDSSVPVWSGVNVAGVSLQGLNPQMGTEGDGEDWKAIHKEVVDGAYEVIKLKGYTSWAIGMSVADLVESIIKNMHKVHPVSTLVQGMHGVKDEVFLSVPCVLGNSGLTDVIHMTLKAEEEKQVQKSAETLWGVQKELIL</sequence>
<accession>O93540</accession>